<gene>
    <name evidence="1" type="primary">rlmF</name>
    <name type="ordered locus">ECUMN_0951</name>
</gene>
<organism>
    <name type="scientific">Escherichia coli O17:K52:H18 (strain UMN026 / ExPEC)</name>
    <dbReference type="NCBI Taxonomy" id="585056"/>
    <lineage>
        <taxon>Bacteria</taxon>
        <taxon>Pseudomonadati</taxon>
        <taxon>Pseudomonadota</taxon>
        <taxon>Gammaproteobacteria</taxon>
        <taxon>Enterobacterales</taxon>
        <taxon>Enterobacteriaceae</taxon>
        <taxon>Escherichia</taxon>
    </lineage>
</organism>
<accession>B7NAA7</accession>
<feature type="chain" id="PRO_1000188524" description="Ribosomal RNA large subunit methyltransferase F">
    <location>
        <begin position="1"/>
        <end position="308"/>
    </location>
</feature>
<comment type="function">
    <text evidence="1">Specifically methylates the adenine in position 1618 of 23S rRNA.</text>
</comment>
<comment type="catalytic activity">
    <reaction evidence="1">
        <text>adenosine(1618) in 23S rRNA + S-adenosyl-L-methionine = N(6)-methyladenosine(1618) in 23S rRNA + S-adenosyl-L-homocysteine + H(+)</text>
        <dbReference type="Rhea" id="RHEA:16497"/>
        <dbReference type="Rhea" id="RHEA-COMP:10229"/>
        <dbReference type="Rhea" id="RHEA-COMP:10231"/>
        <dbReference type="ChEBI" id="CHEBI:15378"/>
        <dbReference type="ChEBI" id="CHEBI:57856"/>
        <dbReference type="ChEBI" id="CHEBI:59789"/>
        <dbReference type="ChEBI" id="CHEBI:74411"/>
        <dbReference type="ChEBI" id="CHEBI:74449"/>
        <dbReference type="EC" id="2.1.1.181"/>
    </reaction>
</comment>
<comment type="subcellular location">
    <subcellularLocation>
        <location evidence="1">Cytoplasm</location>
    </subcellularLocation>
</comment>
<comment type="similarity">
    <text evidence="1">Belongs to the methyltransferase superfamily. METTL16/RlmF family.</text>
</comment>
<proteinExistence type="inferred from homology"/>
<dbReference type="EC" id="2.1.1.181" evidence="1"/>
<dbReference type="EMBL" id="CU928163">
    <property type="protein sequence ID" value="CAR12160.1"/>
    <property type="molecule type" value="Genomic_DNA"/>
</dbReference>
<dbReference type="RefSeq" id="WP_001305954.1">
    <property type="nucleotide sequence ID" value="NC_011751.1"/>
</dbReference>
<dbReference type="RefSeq" id="YP_002411704.1">
    <property type="nucleotide sequence ID" value="NC_011751.1"/>
</dbReference>
<dbReference type="SMR" id="B7NAA7"/>
<dbReference type="STRING" id="585056.ECUMN_0951"/>
<dbReference type="KEGG" id="eum:ECUMN_0951"/>
<dbReference type="PATRIC" id="fig|585056.7.peg.1146"/>
<dbReference type="HOGENOM" id="CLU_027534_3_0_6"/>
<dbReference type="Proteomes" id="UP000007097">
    <property type="component" value="Chromosome"/>
</dbReference>
<dbReference type="GO" id="GO:0005737">
    <property type="term" value="C:cytoplasm"/>
    <property type="evidence" value="ECO:0007669"/>
    <property type="project" value="UniProtKB-SubCell"/>
</dbReference>
<dbReference type="GO" id="GO:0052907">
    <property type="term" value="F:23S rRNA (adenine(1618)-N(6))-methyltransferase activity"/>
    <property type="evidence" value="ECO:0007669"/>
    <property type="project" value="UniProtKB-EC"/>
</dbReference>
<dbReference type="GO" id="GO:0070475">
    <property type="term" value="P:rRNA base methylation"/>
    <property type="evidence" value="ECO:0007669"/>
    <property type="project" value="TreeGrafter"/>
</dbReference>
<dbReference type="FunFam" id="3.40.50.150:FF:000045">
    <property type="entry name" value="Ribosomal RNA large subunit methyltransferase F"/>
    <property type="match status" value="1"/>
</dbReference>
<dbReference type="Gene3D" id="3.40.50.150">
    <property type="entry name" value="Vaccinia Virus protein VP39"/>
    <property type="match status" value="1"/>
</dbReference>
<dbReference type="HAMAP" id="MF_01848">
    <property type="entry name" value="23SrRNA_methyltr_F"/>
    <property type="match status" value="1"/>
</dbReference>
<dbReference type="InterPro" id="IPR010286">
    <property type="entry name" value="METTL16/RlmF"/>
</dbReference>
<dbReference type="InterPro" id="IPR016909">
    <property type="entry name" value="rRNA_lsu_MeTfrase_F"/>
</dbReference>
<dbReference type="InterPro" id="IPR029063">
    <property type="entry name" value="SAM-dependent_MTases_sf"/>
</dbReference>
<dbReference type="NCBIfam" id="NF008725">
    <property type="entry name" value="PRK11727.1"/>
    <property type="match status" value="1"/>
</dbReference>
<dbReference type="PANTHER" id="PTHR13393:SF0">
    <property type="entry name" value="RNA N6-ADENOSINE-METHYLTRANSFERASE METTL16"/>
    <property type="match status" value="1"/>
</dbReference>
<dbReference type="PANTHER" id="PTHR13393">
    <property type="entry name" value="SAM-DEPENDENT METHYLTRANSFERASE"/>
    <property type="match status" value="1"/>
</dbReference>
<dbReference type="Pfam" id="PF05971">
    <property type="entry name" value="Methyltransf_10"/>
    <property type="match status" value="1"/>
</dbReference>
<dbReference type="PIRSF" id="PIRSF029038">
    <property type="entry name" value="Mtase_YbiN_prd"/>
    <property type="match status" value="1"/>
</dbReference>
<dbReference type="SUPFAM" id="SSF53335">
    <property type="entry name" value="S-adenosyl-L-methionine-dependent methyltransferases"/>
    <property type="match status" value="1"/>
</dbReference>
<evidence type="ECO:0000255" key="1">
    <source>
        <dbReference type="HAMAP-Rule" id="MF_01848"/>
    </source>
</evidence>
<reference key="1">
    <citation type="journal article" date="2009" name="PLoS Genet.">
        <title>Organised genome dynamics in the Escherichia coli species results in highly diverse adaptive paths.</title>
        <authorList>
            <person name="Touchon M."/>
            <person name="Hoede C."/>
            <person name="Tenaillon O."/>
            <person name="Barbe V."/>
            <person name="Baeriswyl S."/>
            <person name="Bidet P."/>
            <person name="Bingen E."/>
            <person name="Bonacorsi S."/>
            <person name="Bouchier C."/>
            <person name="Bouvet O."/>
            <person name="Calteau A."/>
            <person name="Chiapello H."/>
            <person name="Clermont O."/>
            <person name="Cruveiller S."/>
            <person name="Danchin A."/>
            <person name="Diard M."/>
            <person name="Dossat C."/>
            <person name="Karoui M.E."/>
            <person name="Frapy E."/>
            <person name="Garry L."/>
            <person name="Ghigo J.M."/>
            <person name="Gilles A.M."/>
            <person name="Johnson J."/>
            <person name="Le Bouguenec C."/>
            <person name="Lescat M."/>
            <person name="Mangenot S."/>
            <person name="Martinez-Jehanne V."/>
            <person name="Matic I."/>
            <person name="Nassif X."/>
            <person name="Oztas S."/>
            <person name="Petit M.A."/>
            <person name="Pichon C."/>
            <person name="Rouy Z."/>
            <person name="Ruf C.S."/>
            <person name="Schneider D."/>
            <person name="Tourret J."/>
            <person name="Vacherie B."/>
            <person name="Vallenet D."/>
            <person name="Medigue C."/>
            <person name="Rocha E.P.C."/>
            <person name="Denamur E."/>
        </authorList>
    </citation>
    <scope>NUCLEOTIDE SEQUENCE [LARGE SCALE GENOMIC DNA]</scope>
    <source>
        <strain>UMN026 / ExPEC</strain>
    </source>
</reference>
<sequence length="308" mass="34208">MSAQKPGLHPRNRHHSRYDLATLCQVNPELRQFLTLTPAGEQSVDFANPLAVKALNKALLAHFYAVANWDIPDGFLCPPVPGRADYIHHLADLLAEATGSIPANASILDIGVGANCIYPLIGVHEYGWRFTGSETSSQALSSAQAIISANPGLNRAIRLRRQKESGAIFNGIIHKNEQYDATLCNPPFHDSAAAARAGSERKRRNLGLNKDDVLNFGGQQQELWCEGGEVAFIKKMIEESKGFAKQVMWFTSLVSRGENLPPLYRALTDVGAVKVVKKEMAQGQKQSRFIAWTFMNDEQRRRFVNRQR</sequence>
<keyword id="KW-0963">Cytoplasm</keyword>
<keyword id="KW-0489">Methyltransferase</keyword>
<keyword id="KW-0698">rRNA processing</keyword>
<keyword id="KW-0949">S-adenosyl-L-methionine</keyword>
<keyword id="KW-0808">Transferase</keyword>
<protein>
    <recommendedName>
        <fullName evidence="1">Ribosomal RNA large subunit methyltransferase F</fullName>
        <ecNumber evidence="1">2.1.1.181</ecNumber>
    </recommendedName>
    <alternativeName>
        <fullName evidence="1">23S rRNA mA1618 methyltransferase</fullName>
    </alternativeName>
    <alternativeName>
        <fullName evidence="1">rRNA adenine N-6-methyltransferase</fullName>
    </alternativeName>
</protein>
<name>RLMF_ECOLU</name>